<gene>
    <name evidence="1" type="primary">hisA</name>
    <name type="ordered locus">STER_1201</name>
</gene>
<comment type="catalytic activity">
    <reaction evidence="1">
        <text>1-(5-phospho-beta-D-ribosyl)-5-[(5-phospho-beta-D-ribosylamino)methylideneamino]imidazole-4-carboxamide = 5-[(5-phospho-1-deoxy-D-ribulos-1-ylimino)methylamino]-1-(5-phospho-beta-D-ribosyl)imidazole-4-carboxamide</text>
        <dbReference type="Rhea" id="RHEA:15469"/>
        <dbReference type="ChEBI" id="CHEBI:58435"/>
        <dbReference type="ChEBI" id="CHEBI:58525"/>
        <dbReference type="EC" id="5.3.1.16"/>
    </reaction>
</comment>
<comment type="pathway">
    <text evidence="1">Amino-acid biosynthesis; L-histidine biosynthesis; L-histidine from 5-phospho-alpha-D-ribose 1-diphosphate: step 4/9.</text>
</comment>
<comment type="subcellular location">
    <subcellularLocation>
        <location evidence="1">Cytoplasm</location>
    </subcellularLocation>
</comment>
<comment type="similarity">
    <text evidence="1">Belongs to the HisA/HisF family.</text>
</comment>
<sequence>MQILPAIDIKDGQAVRLFKGDFNQKTVVNPDIIEQAKTFKNAGIQFIHLVDLDGTLDGRATNRDLITEVKKISGLGIEVGGGIRTLEQIRDYLAVGIDRIIIGSMAVKDPDFVRAALEEFGADRIVVGIDAKAGLVATEGWLETSNVDYITLAKEMEKMGVTLFIYTDVDRDGTLTGPNLDHYKCLVSELTTAKVIASGGVAELADLNHLQEIGVAGTIVGKAYYNGNITLDQLKSFGG</sequence>
<dbReference type="EC" id="5.3.1.16" evidence="1"/>
<dbReference type="EMBL" id="CP000419">
    <property type="protein sequence ID" value="ABJ66391.1"/>
    <property type="molecule type" value="Genomic_DNA"/>
</dbReference>
<dbReference type="RefSeq" id="WP_011681266.1">
    <property type="nucleotide sequence ID" value="NC_008532.1"/>
</dbReference>
<dbReference type="SMR" id="Q03K81"/>
<dbReference type="KEGG" id="ste:STER_1201"/>
<dbReference type="HOGENOM" id="CLU_048577_1_2_9"/>
<dbReference type="UniPathway" id="UPA00031">
    <property type="reaction ID" value="UER00009"/>
</dbReference>
<dbReference type="GO" id="GO:0005737">
    <property type="term" value="C:cytoplasm"/>
    <property type="evidence" value="ECO:0007669"/>
    <property type="project" value="UniProtKB-SubCell"/>
</dbReference>
<dbReference type="GO" id="GO:0003949">
    <property type="term" value="F:1-(5-phosphoribosyl)-5-[(5-phosphoribosylamino)methylideneamino]imidazole-4-carboxamide isomerase activity"/>
    <property type="evidence" value="ECO:0007669"/>
    <property type="project" value="UniProtKB-UniRule"/>
</dbReference>
<dbReference type="GO" id="GO:0000105">
    <property type="term" value="P:L-histidine biosynthetic process"/>
    <property type="evidence" value="ECO:0007669"/>
    <property type="project" value="UniProtKB-UniRule"/>
</dbReference>
<dbReference type="GO" id="GO:0000162">
    <property type="term" value="P:L-tryptophan biosynthetic process"/>
    <property type="evidence" value="ECO:0007669"/>
    <property type="project" value="TreeGrafter"/>
</dbReference>
<dbReference type="CDD" id="cd04732">
    <property type="entry name" value="HisA"/>
    <property type="match status" value="1"/>
</dbReference>
<dbReference type="FunFam" id="3.20.20.70:FF:000009">
    <property type="entry name" value="1-(5-phosphoribosyl)-5-[(5-phosphoribosylamino)methylideneamino] imidazole-4-carboxamide isomerase"/>
    <property type="match status" value="1"/>
</dbReference>
<dbReference type="Gene3D" id="3.20.20.70">
    <property type="entry name" value="Aldolase class I"/>
    <property type="match status" value="1"/>
</dbReference>
<dbReference type="HAMAP" id="MF_01014">
    <property type="entry name" value="HisA"/>
    <property type="match status" value="1"/>
</dbReference>
<dbReference type="InterPro" id="IPR013785">
    <property type="entry name" value="Aldolase_TIM"/>
</dbReference>
<dbReference type="InterPro" id="IPR006062">
    <property type="entry name" value="His_biosynth"/>
</dbReference>
<dbReference type="InterPro" id="IPR006063">
    <property type="entry name" value="HisA_bact_arch"/>
</dbReference>
<dbReference type="InterPro" id="IPR044524">
    <property type="entry name" value="Isoase_HisA-like"/>
</dbReference>
<dbReference type="InterPro" id="IPR023016">
    <property type="entry name" value="Isoase_HisA-like_bact"/>
</dbReference>
<dbReference type="InterPro" id="IPR011060">
    <property type="entry name" value="RibuloseP-bd_barrel"/>
</dbReference>
<dbReference type="NCBIfam" id="TIGR00007">
    <property type="entry name" value="1-(5-phosphoribosyl)-5-[(5-phosphoribosylamino)methylideneamino]imidazole-4-carboxamide isomerase"/>
    <property type="match status" value="1"/>
</dbReference>
<dbReference type="PANTHER" id="PTHR43090">
    <property type="entry name" value="1-(5-PHOSPHORIBOSYL)-5-[(5-PHOSPHORIBOSYLAMINO)METHYLIDENEAMINO] IMIDAZOLE-4-CARBOXAMIDE ISOMERASE"/>
    <property type="match status" value="1"/>
</dbReference>
<dbReference type="PANTHER" id="PTHR43090:SF2">
    <property type="entry name" value="1-(5-PHOSPHORIBOSYL)-5-[(5-PHOSPHORIBOSYLAMINO)METHYLIDENEAMINO] IMIDAZOLE-4-CARBOXAMIDE ISOMERASE"/>
    <property type="match status" value="1"/>
</dbReference>
<dbReference type="Pfam" id="PF00977">
    <property type="entry name" value="His_biosynth"/>
    <property type="match status" value="1"/>
</dbReference>
<dbReference type="SUPFAM" id="SSF51366">
    <property type="entry name" value="Ribulose-phoshate binding barrel"/>
    <property type="match status" value="1"/>
</dbReference>
<evidence type="ECO:0000255" key="1">
    <source>
        <dbReference type="HAMAP-Rule" id="MF_01014"/>
    </source>
</evidence>
<keyword id="KW-0028">Amino-acid biosynthesis</keyword>
<keyword id="KW-0963">Cytoplasm</keyword>
<keyword id="KW-0368">Histidine biosynthesis</keyword>
<keyword id="KW-0413">Isomerase</keyword>
<organism>
    <name type="scientific">Streptococcus thermophilus (strain ATCC BAA-491 / LMD-9)</name>
    <dbReference type="NCBI Taxonomy" id="322159"/>
    <lineage>
        <taxon>Bacteria</taxon>
        <taxon>Bacillati</taxon>
        <taxon>Bacillota</taxon>
        <taxon>Bacilli</taxon>
        <taxon>Lactobacillales</taxon>
        <taxon>Streptococcaceae</taxon>
        <taxon>Streptococcus</taxon>
    </lineage>
</organism>
<accession>Q03K81</accession>
<protein>
    <recommendedName>
        <fullName evidence="1">1-(5-phosphoribosyl)-5-[(5-phosphoribosylamino)methylideneamino] imidazole-4-carboxamide isomerase</fullName>
        <ecNumber evidence="1">5.3.1.16</ecNumber>
    </recommendedName>
    <alternativeName>
        <fullName evidence="1">Phosphoribosylformimino-5-aminoimidazole carboxamide ribotide isomerase</fullName>
    </alternativeName>
</protein>
<feature type="chain" id="PRO_0000290550" description="1-(5-phosphoribosyl)-5-[(5-phosphoribosylamino)methylideneamino] imidazole-4-carboxamide isomerase">
    <location>
        <begin position="1"/>
        <end position="239"/>
    </location>
</feature>
<feature type="active site" description="Proton acceptor" evidence="1">
    <location>
        <position position="8"/>
    </location>
</feature>
<feature type="active site" description="Proton donor" evidence="1">
    <location>
        <position position="130"/>
    </location>
</feature>
<reference key="1">
    <citation type="journal article" date="2006" name="Proc. Natl. Acad. Sci. U.S.A.">
        <title>Comparative genomics of the lactic acid bacteria.</title>
        <authorList>
            <person name="Makarova K.S."/>
            <person name="Slesarev A."/>
            <person name="Wolf Y.I."/>
            <person name="Sorokin A."/>
            <person name="Mirkin B."/>
            <person name="Koonin E.V."/>
            <person name="Pavlov A."/>
            <person name="Pavlova N."/>
            <person name="Karamychev V."/>
            <person name="Polouchine N."/>
            <person name="Shakhova V."/>
            <person name="Grigoriev I."/>
            <person name="Lou Y."/>
            <person name="Rohksar D."/>
            <person name="Lucas S."/>
            <person name="Huang K."/>
            <person name="Goodstein D.M."/>
            <person name="Hawkins T."/>
            <person name="Plengvidhya V."/>
            <person name="Welker D."/>
            <person name="Hughes J."/>
            <person name="Goh Y."/>
            <person name="Benson A."/>
            <person name="Baldwin K."/>
            <person name="Lee J.-H."/>
            <person name="Diaz-Muniz I."/>
            <person name="Dosti B."/>
            <person name="Smeianov V."/>
            <person name="Wechter W."/>
            <person name="Barabote R."/>
            <person name="Lorca G."/>
            <person name="Altermann E."/>
            <person name="Barrangou R."/>
            <person name="Ganesan B."/>
            <person name="Xie Y."/>
            <person name="Rawsthorne H."/>
            <person name="Tamir D."/>
            <person name="Parker C."/>
            <person name="Breidt F."/>
            <person name="Broadbent J.R."/>
            <person name="Hutkins R."/>
            <person name="O'Sullivan D."/>
            <person name="Steele J."/>
            <person name="Unlu G."/>
            <person name="Saier M.H. Jr."/>
            <person name="Klaenhammer T."/>
            <person name="Richardson P."/>
            <person name="Kozyavkin S."/>
            <person name="Weimer B.C."/>
            <person name="Mills D.A."/>
        </authorList>
    </citation>
    <scope>NUCLEOTIDE SEQUENCE [LARGE SCALE GENOMIC DNA]</scope>
    <source>
        <strain>ATCC BAA-491 / LMD-9</strain>
    </source>
</reference>
<name>HIS4_STRTD</name>
<proteinExistence type="inferred from homology"/>